<organism>
    <name type="scientific">Pseudomonas entomophila (strain L48)</name>
    <dbReference type="NCBI Taxonomy" id="384676"/>
    <lineage>
        <taxon>Bacteria</taxon>
        <taxon>Pseudomonadati</taxon>
        <taxon>Pseudomonadota</taxon>
        <taxon>Gammaproteobacteria</taxon>
        <taxon>Pseudomonadales</taxon>
        <taxon>Pseudomonadaceae</taxon>
        <taxon>Pseudomonas</taxon>
    </lineage>
</organism>
<name>RLMKL_PSEE4</name>
<dbReference type="EC" id="2.1.1.173" evidence="1"/>
<dbReference type="EC" id="2.1.1.264" evidence="1"/>
<dbReference type="EMBL" id="CT573326">
    <property type="protein sequence ID" value="CAK14601.1"/>
    <property type="molecule type" value="Genomic_DNA"/>
</dbReference>
<dbReference type="RefSeq" id="WP_011533010.1">
    <property type="nucleotide sequence ID" value="NC_008027.1"/>
</dbReference>
<dbReference type="SMR" id="Q1ICL2"/>
<dbReference type="STRING" id="384676.PSEEN1757"/>
<dbReference type="GeneID" id="32804993"/>
<dbReference type="KEGG" id="pen:PSEEN1757"/>
<dbReference type="eggNOG" id="COG0116">
    <property type="taxonomic scope" value="Bacteria"/>
</dbReference>
<dbReference type="eggNOG" id="COG1092">
    <property type="taxonomic scope" value="Bacteria"/>
</dbReference>
<dbReference type="HOGENOM" id="CLU_014042_2_0_6"/>
<dbReference type="OrthoDB" id="9809404at2"/>
<dbReference type="Proteomes" id="UP000000658">
    <property type="component" value="Chromosome"/>
</dbReference>
<dbReference type="GO" id="GO:0005737">
    <property type="term" value="C:cytoplasm"/>
    <property type="evidence" value="ECO:0007669"/>
    <property type="project" value="UniProtKB-SubCell"/>
</dbReference>
<dbReference type="GO" id="GO:0052915">
    <property type="term" value="F:23S rRNA (guanine(2445)-N(2))-methyltransferase activity"/>
    <property type="evidence" value="ECO:0007669"/>
    <property type="project" value="UniProtKB-UniRule"/>
</dbReference>
<dbReference type="GO" id="GO:0003723">
    <property type="term" value="F:RNA binding"/>
    <property type="evidence" value="ECO:0007669"/>
    <property type="project" value="UniProtKB-KW"/>
</dbReference>
<dbReference type="GO" id="GO:0070043">
    <property type="term" value="F:rRNA (guanine-N7-)-methyltransferase activity"/>
    <property type="evidence" value="ECO:0007669"/>
    <property type="project" value="UniProtKB-UniRule"/>
</dbReference>
<dbReference type="CDD" id="cd02440">
    <property type="entry name" value="AdoMet_MTases"/>
    <property type="match status" value="1"/>
</dbReference>
<dbReference type="CDD" id="cd11715">
    <property type="entry name" value="THUMP_AdoMetMT"/>
    <property type="match status" value="1"/>
</dbReference>
<dbReference type="Gene3D" id="3.30.2130.30">
    <property type="match status" value="1"/>
</dbReference>
<dbReference type="Gene3D" id="3.30.750.80">
    <property type="entry name" value="RNA methyltransferase domain (HRMD) like"/>
    <property type="match status" value="1"/>
</dbReference>
<dbReference type="Gene3D" id="3.40.50.150">
    <property type="entry name" value="Vaccinia Virus protein VP39"/>
    <property type="match status" value="2"/>
</dbReference>
<dbReference type="HAMAP" id="MF_01858">
    <property type="entry name" value="23SrRNA_methyltr_KL"/>
    <property type="match status" value="1"/>
</dbReference>
<dbReference type="InterPro" id="IPR017244">
    <property type="entry name" value="23SrRNA_methyltr_KL"/>
</dbReference>
<dbReference type="InterPro" id="IPR002052">
    <property type="entry name" value="DNA_methylase_N6_adenine_CS"/>
</dbReference>
<dbReference type="InterPro" id="IPR000241">
    <property type="entry name" value="RlmKL-like_Mtase"/>
</dbReference>
<dbReference type="InterPro" id="IPR054170">
    <property type="entry name" value="RlmL_1st"/>
</dbReference>
<dbReference type="InterPro" id="IPR019614">
    <property type="entry name" value="SAM-dep_methyl-trfase"/>
</dbReference>
<dbReference type="InterPro" id="IPR029063">
    <property type="entry name" value="SAM-dependent_MTases_sf"/>
</dbReference>
<dbReference type="InterPro" id="IPR004114">
    <property type="entry name" value="THUMP_dom"/>
</dbReference>
<dbReference type="NCBIfam" id="NF008748">
    <property type="entry name" value="PRK11783.1"/>
    <property type="match status" value="1"/>
</dbReference>
<dbReference type="PANTHER" id="PTHR47313">
    <property type="entry name" value="RIBOSOMAL RNA LARGE SUBUNIT METHYLTRANSFERASE K/L"/>
    <property type="match status" value="1"/>
</dbReference>
<dbReference type="PANTHER" id="PTHR47313:SF1">
    <property type="entry name" value="RIBOSOMAL RNA LARGE SUBUNIT METHYLTRANSFERASE K_L"/>
    <property type="match status" value="1"/>
</dbReference>
<dbReference type="Pfam" id="PF10672">
    <property type="entry name" value="Methyltrans_SAM"/>
    <property type="match status" value="1"/>
</dbReference>
<dbReference type="Pfam" id="PF22020">
    <property type="entry name" value="RlmL_1st"/>
    <property type="match status" value="1"/>
</dbReference>
<dbReference type="Pfam" id="PF02926">
    <property type="entry name" value="THUMP"/>
    <property type="match status" value="1"/>
</dbReference>
<dbReference type="Pfam" id="PF01170">
    <property type="entry name" value="UPF0020"/>
    <property type="match status" value="1"/>
</dbReference>
<dbReference type="PIRSF" id="PIRSF037618">
    <property type="entry name" value="RNA_Mtase_bacteria_prd"/>
    <property type="match status" value="1"/>
</dbReference>
<dbReference type="SMART" id="SM00981">
    <property type="entry name" value="THUMP"/>
    <property type="match status" value="1"/>
</dbReference>
<dbReference type="SUPFAM" id="SSF53335">
    <property type="entry name" value="S-adenosyl-L-methionine-dependent methyltransferases"/>
    <property type="match status" value="2"/>
</dbReference>
<dbReference type="PROSITE" id="PS51165">
    <property type="entry name" value="THUMP"/>
    <property type="match status" value="1"/>
</dbReference>
<evidence type="ECO:0000255" key="1">
    <source>
        <dbReference type="HAMAP-Rule" id="MF_01858"/>
    </source>
</evidence>
<evidence type="ECO:0000256" key="2">
    <source>
        <dbReference type="SAM" id="MobiDB-lite"/>
    </source>
</evidence>
<reference key="1">
    <citation type="journal article" date="2006" name="Nat. Biotechnol.">
        <title>Complete genome sequence of the entomopathogenic and metabolically versatile soil bacterium Pseudomonas entomophila.</title>
        <authorList>
            <person name="Vodovar N."/>
            <person name="Vallenet D."/>
            <person name="Cruveiller S."/>
            <person name="Rouy Z."/>
            <person name="Barbe V."/>
            <person name="Acosta C."/>
            <person name="Cattolico L."/>
            <person name="Jubin C."/>
            <person name="Lajus A."/>
            <person name="Segurens B."/>
            <person name="Vacherie B."/>
            <person name="Wincker P."/>
            <person name="Weissenbach J."/>
            <person name="Lemaitre B."/>
            <person name="Medigue C."/>
            <person name="Boccard F."/>
        </authorList>
    </citation>
    <scope>NUCLEOTIDE SEQUENCE [LARGE SCALE GENOMIC DNA]</scope>
    <source>
        <strain>L48</strain>
    </source>
</reference>
<accession>Q1ICL2</accession>
<gene>
    <name evidence="1" type="primary">rlmL</name>
    <name type="ordered locus">PSEEN1757</name>
</gene>
<sequence>MSDRFELYLTCPKGLEGLLAEEANQLGLTEVREHTSAIRGSADMETAYRLCLWSRLANRVLLVLKRFSMKNADDLYDGVHAVDWAEHLEADGTLAVEFSGHGSGIDNTHFGALKVKDAIVDKLRSREGLRPSVDKLDPDLRVHLRLDRGEAILSLDLSGHSLHQRGYRLQQGAAPLKENLAAAVLIRAGWPRIAAEGGALADPMCGVGTFLVEAAMIAADIAPNLKRERWGFSAWLGHVPALWRKLHDEAQARAQAGLAKPPLWIRGYEADPRLIQPGRNNVERAGLGDWVKIYQGEVASFEPRPDQNQKGLVISNPPYGERLGDEASLLYLYQNLGERLRQACMGWEAAVFTGAPELGKRMGIRSHKQYAFWNGALPCKLLLFKVQPDQFVTGERRQAAVEEGEPRRQAPVASEPARLSEGAQMFANRLQKNFKQLGKWARREQVDCYRVYDADMPEYALAVDLYQDWVHVQEYAAPRSVDPDKAQVRLLDALAAIPQALGIDPQRVVLKRRERQSGTRQYERQATEGRFQEVTEGGVKLLVNLTDYLDTGLFLDHRPMRMRIQREAVGKRFLNLFCYTATATVHAAKGGARSTTSVDLSKTYLDWARRNLSLNGFSERNRLEQSDVMAWLQNNQESFDLIFIDPPTFSNSKRMEGVFDVQRDHVELLDLAMARLAPGGVLYFSNNFRKFQLDEHLSTRYAVEEISAQTLDPDFARNNRIHRAWQLRLR</sequence>
<keyword id="KW-0963">Cytoplasm</keyword>
<keyword id="KW-0489">Methyltransferase</keyword>
<keyword id="KW-0694">RNA-binding</keyword>
<keyword id="KW-0698">rRNA processing</keyword>
<keyword id="KW-0949">S-adenosyl-L-methionine</keyword>
<keyword id="KW-0808">Transferase</keyword>
<comment type="function">
    <text evidence="1">Specifically methylates the guanine in position 2445 (m2G2445) and the guanine in position 2069 (m7G2069) of 23S rRNA.</text>
</comment>
<comment type="catalytic activity">
    <reaction evidence="1">
        <text>guanosine(2445) in 23S rRNA + S-adenosyl-L-methionine = N(2)-methylguanosine(2445) in 23S rRNA + S-adenosyl-L-homocysteine + H(+)</text>
        <dbReference type="Rhea" id="RHEA:42740"/>
        <dbReference type="Rhea" id="RHEA-COMP:10215"/>
        <dbReference type="Rhea" id="RHEA-COMP:10216"/>
        <dbReference type="ChEBI" id="CHEBI:15378"/>
        <dbReference type="ChEBI" id="CHEBI:57856"/>
        <dbReference type="ChEBI" id="CHEBI:59789"/>
        <dbReference type="ChEBI" id="CHEBI:74269"/>
        <dbReference type="ChEBI" id="CHEBI:74481"/>
        <dbReference type="EC" id="2.1.1.173"/>
    </reaction>
</comment>
<comment type="catalytic activity">
    <reaction evidence="1">
        <text>guanosine(2069) in 23S rRNA + S-adenosyl-L-methionine = N(2)-methylguanosine(2069) in 23S rRNA + S-adenosyl-L-homocysteine + H(+)</text>
        <dbReference type="Rhea" id="RHEA:43772"/>
        <dbReference type="Rhea" id="RHEA-COMP:10688"/>
        <dbReference type="Rhea" id="RHEA-COMP:10689"/>
        <dbReference type="ChEBI" id="CHEBI:15378"/>
        <dbReference type="ChEBI" id="CHEBI:57856"/>
        <dbReference type="ChEBI" id="CHEBI:59789"/>
        <dbReference type="ChEBI" id="CHEBI:74269"/>
        <dbReference type="ChEBI" id="CHEBI:74481"/>
        <dbReference type="EC" id="2.1.1.264"/>
    </reaction>
</comment>
<comment type="subcellular location">
    <subcellularLocation>
        <location evidence="1">Cytoplasm</location>
    </subcellularLocation>
</comment>
<comment type="similarity">
    <text evidence="1">Belongs to the methyltransferase superfamily. RlmKL family.</text>
</comment>
<feature type="chain" id="PRO_0000366787" description="Ribosomal RNA large subunit methyltransferase K/L">
    <location>
        <begin position="1"/>
        <end position="730"/>
    </location>
</feature>
<feature type="domain" description="THUMP" evidence="1">
    <location>
        <begin position="46"/>
        <end position="157"/>
    </location>
</feature>
<feature type="region of interest" description="Disordered" evidence="2">
    <location>
        <begin position="399"/>
        <end position="418"/>
    </location>
</feature>
<feature type="compositionally biased region" description="Basic and acidic residues" evidence="2">
    <location>
        <begin position="399"/>
        <end position="408"/>
    </location>
</feature>
<proteinExistence type="inferred from homology"/>
<protein>
    <recommendedName>
        <fullName evidence="1">Ribosomal RNA large subunit methyltransferase K/L</fullName>
    </recommendedName>
    <domain>
        <recommendedName>
            <fullName evidence="1">23S rRNA m2G2445 methyltransferase</fullName>
            <ecNumber evidence="1">2.1.1.173</ecNumber>
        </recommendedName>
        <alternativeName>
            <fullName evidence="1">rRNA (guanine-N(2)-)-methyltransferase RlmL</fullName>
        </alternativeName>
    </domain>
    <domain>
        <recommendedName>
            <fullName evidence="1">23S rRNA m7G2069 methyltransferase</fullName>
            <ecNumber evidence="1">2.1.1.264</ecNumber>
        </recommendedName>
        <alternativeName>
            <fullName evidence="1">rRNA (guanine-N(7)-)-methyltransferase RlmK</fullName>
        </alternativeName>
    </domain>
</protein>